<dbReference type="EC" id="2.3.2.-" evidence="1"/>
<dbReference type="EMBL" id="AK003685">
    <property type="protein sequence ID" value="BAB22938.1"/>
    <property type="molecule type" value="mRNA"/>
</dbReference>
<dbReference type="EMBL" id="AK051277">
    <property type="protein sequence ID" value="BAC34589.1"/>
    <property type="molecule type" value="mRNA"/>
</dbReference>
<dbReference type="EMBL" id="BC009125">
    <property type="protein sequence ID" value="AAH09125.1"/>
    <property type="molecule type" value="mRNA"/>
</dbReference>
<dbReference type="CCDS" id="CCDS27498.1">
    <molecule id="Q91VT1-1"/>
</dbReference>
<dbReference type="CCDS" id="CCDS49611.1">
    <molecule id="Q91VT1-2"/>
</dbReference>
<dbReference type="RefSeq" id="NP_001158076.1">
    <molecule id="Q91VT1-2"/>
    <property type="nucleotide sequence ID" value="NM_001164604.1"/>
</dbReference>
<dbReference type="RefSeq" id="NP_081022.2">
    <molecule id="Q91VT1-1"/>
    <property type="nucleotide sequence ID" value="NM_026746.3"/>
</dbReference>
<dbReference type="SMR" id="Q91VT1"/>
<dbReference type="BioGRID" id="212891">
    <property type="interactions" value="4"/>
</dbReference>
<dbReference type="FunCoup" id="Q91VT1">
    <property type="interactions" value="2924"/>
</dbReference>
<dbReference type="IntAct" id="Q91VT1">
    <property type="interactions" value="1"/>
</dbReference>
<dbReference type="STRING" id="10090.ENSMUSP00000078641"/>
<dbReference type="iPTMnet" id="Q91VT1"/>
<dbReference type="PhosphoSitePlus" id="Q91VT1"/>
<dbReference type="PaxDb" id="10090-ENSMUSP00000078641"/>
<dbReference type="PeptideAtlas" id="Q91VT1"/>
<dbReference type="ProteomicsDB" id="295527">
    <molecule id="Q91VT1-1"/>
</dbReference>
<dbReference type="ProteomicsDB" id="295528">
    <molecule id="Q91VT1-2"/>
</dbReference>
<dbReference type="Pumba" id="Q91VT1"/>
<dbReference type="Antibodypedia" id="27202">
    <property type="antibodies" value="312 antibodies from 35 providers"/>
</dbReference>
<dbReference type="DNASU" id="68501"/>
<dbReference type="Ensembl" id="ENSMUST00000079703.11">
    <molecule id="Q91VT1-1"/>
    <property type="protein sequence ID" value="ENSMUSP00000078641.4"/>
    <property type="gene ID" value="ENSMUSG00000059586.11"/>
</dbReference>
<dbReference type="Ensembl" id="ENSMUST00000168722.3">
    <molecule id="Q91VT1-2"/>
    <property type="protein sequence ID" value="ENSMUSP00000128893.2"/>
    <property type="gene ID" value="ENSMUSG00000059586.11"/>
</dbReference>
<dbReference type="GeneID" id="68501"/>
<dbReference type="KEGG" id="mmu:68501"/>
<dbReference type="UCSC" id="uc007vxu.2">
    <molecule id="Q91VT1-1"/>
    <property type="organism name" value="mouse"/>
</dbReference>
<dbReference type="AGR" id="MGI:1915751"/>
<dbReference type="CTD" id="286053"/>
<dbReference type="MGI" id="MGI:1915751">
    <property type="gene designation" value="Nsmce2"/>
</dbReference>
<dbReference type="VEuPathDB" id="HostDB:ENSMUSG00000059586"/>
<dbReference type="eggNOG" id="KOG2979">
    <property type="taxonomic scope" value="Eukaryota"/>
</dbReference>
<dbReference type="GeneTree" id="ENSGT00390000013961"/>
<dbReference type="HOGENOM" id="CLU_106543_0_0_1"/>
<dbReference type="InParanoid" id="Q91VT1"/>
<dbReference type="OMA" id="NHHYDEG"/>
<dbReference type="PhylomeDB" id="Q91VT1"/>
<dbReference type="TreeFam" id="TF324383"/>
<dbReference type="Reactome" id="R-MMU-3108214">
    <property type="pathway name" value="SUMOylation of DNA damage response and repair proteins"/>
</dbReference>
<dbReference type="UniPathway" id="UPA00886"/>
<dbReference type="BioGRID-ORCS" id="68501">
    <property type="hits" value="20 hits in 113 CRISPR screens"/>
</dbReference>
<dbReference type="ChiTaRS" id="Nsmce2">
    <property type="organism name" value="mouse"/>
</dbReference>
<dbReference type="PRO" id="PR:Q91VT1"/>
<dbReference type="Proteomes" id="UP000000589">
    <property type="component" value="Chromosome 15"/>
</dbReference>
<dbReference type="RNAct" id="Q91VT1">
    <property type="molecule type" value="protein"/>
</dbReference>
<dbReference type="Bgee" id="ENSMUSG00000059586">
    <property type="expression patterns" value="Expressed in animal zygote and 222 other cell types or tissues"/>
</dbReference>
<dbReference type="ExpressionAtlas" id="Q91VT1">
    <property type="expression patterns" value="baseline and differential"/>
</dbReference>
<dbReference type="GO" id="GO:0000781">
    <property type="term" value="C:chromosome, telomeric region"/>
    <property type="evidence" value="ECO:0000250"/>
    <property type="project" value="UniProtKB"/>
</dbReference>
<dbReference type="GO" id="GO:0016605">
    <property type="term" value="C:PML body"/>
    <property type="evidence" value="ECO:0000250"/>
    <property type="project" value="UniProtKB"/>
</dbReference>
<dbReference type="GO" id="GO:0030915">
    <property type="term" value="C:Smc5-Smc6 complex"/>
    <property type="evidence" value="ECO:0000250"/>
    <property type="project" value="UniProtKB"/>
</dbReference>
<dbReference type="GO" id="GO:0019789">
    <property type="term" value="F:SUMO transferase activity"/>
    <property type="evidence" value="ECO:0000250"/>
    <property type="project" value="UniProtKB"/>
</dbReference>
<dbReference type="GO" id="GO:0004842">
    <property type="term" value="F:ubiquitin-protein transferase activity"/>
    <property type="evidence" value="ECO:0007669"/>
    <property type="project" value="InterPro"/>
</dbReference>
<dbReference type="GO" id="GO:0008270">
    <property type="term" value="F:zinc ion binding"/>
    <property type="evidence" value="ECO:0007669"/>
    <property type="project" value="UniProtKB-KW"/>
</dbReference>
<dbReference type="GO" id="GO:0051301">
    <property type="term" value="P:cell division"/>
    <property type="evidence" value="ECO:0007669"/>
    <property type="project" value="UniProtKB-KW"/>
</dbReference>
<dbReference type="GO" id="GO:0090398">
    <property type="term" value="P:cellular senescence"/>
    <property type="evidence" value="ECO:0000250"/>
    <property type="project" value="UniProtKB"/>
</dbReference>
<dbReference type="GO" id="GO:0000724">
    <property type="term" value="P:double-strand break repair via homologous recombination"/>
    <property type="evidence" value="ECO:0000250"/>
    <property type="project" value="UniProtKB"/>
</dbReference>
<dbReference type="GO" id="GO:0034184">
    <property type="term" value="P:positive regulation of maintenance of mitotic sister chromatid cohesion"/>
    <property type="evidence" value="ECO:0000250"/>
    <property type="project" value="UniProtKB"/>
</dbReference>
<dbReference type="GO" id="GO:0045842">
    <property type="term" value="P:positive regulation of mitotic metaphase/anaphase transition"/>
    <property type="evidence" value="ECO:0000250"/>
    <property type="project" value="UniProtKB"/>
</dbReference>
<dbReference type="GO" id="GO:0016925">
    <property type="term" value="P:protein sumoylation"/>
    <property type="evidence" value="ECO:0007669"/>
    <property type="project" value="UniProtKB-UniPathway"/>
</dbReference>
<dbReference type="GO" id="GO:0016567">
    <property type="term" value="P:protein ubiquitination"/>
    <property type="evidence" value="ECO:0007669"/>
    <property type="project" value="InterPro"/>
</dbReference>
<dbReference type="GO" id="GO:0000722">
    <property type="term" value="P:telomere maintenance via recombination"/>
    <property type="evidence" value="ECO:0000250"/>
    <property type="project" value="UniProtKB"/>
</dbReference>
<dbReference type="CDD" id="cd16651">
    <property type="entry name" value="SPL-RING_NSE2"/>
    <property type="match status" value="1"/>
</dbReference>
<dbReference type="FunFam" id="3.30.40.10:FF:000343">
    <property type="entry name" value="E3 SUMO-protein ligase NSE2 isoform X1"/>
    <property type="match status" value="1"/>
</dbReference>
<dbReference type="Gene3D" id="3.30.40.10">
    <property type="entry name" value="Zinc/RING finger domain, C3HC4 (zinc finger)"/>
    <property type="match status" value="1"/>
</dbReference>
<dbReference type="InterPro" id="IPR026846">
    <property type="entry name" value="Nse2(Mms21)"/>
</dbReference>
<dbReference type="InterPro" id="IPR003613">
    <property type="entry name" value="Ubox_domain"/>
</dbReference>
<dbReference type="InterPro" id="IPR004181">
    <property type="entry name" value="Znf_MIZ"/>
</dbReference>
<dbReference type="InterPro" id="IPR013083">
    <property type="entry name" value="Znf_RING/FYVE/PHD"/>
</dbReference>
<dbReference type="PANTHER" id="PTHR21330">
    <property type="entry name" value="E3 SUMO-PROTEIN LIGASE NSE2"/>
    <property type="match status" value="1"/>
</dbReference>
<dbReference type="PANTHER" id="PTHR21330:SF1">
    <property type="entry name" value="E3 SUMO-PROTEIN LIGASE NSE2"/>
    <property type="match status" value="1"/>
</dbReference>
<dbReference type="Pfam" id="PF11789">
    <property type="entry name" value="zf-Nse"/>
    <property type="match status" value="1"/>
</dbReference>
<dbReference type="SMART" id="SM00504">
    <property type="entry name" value="Ubox"/>
    <property type="match status" value="1"/>
</dbReference>
<dbReference type="SUPFAM" id="SSF57850">
    <property type="entry name" value="RING/U-box"/>
    <property type="match status" value="1"/>
</dbReference>
<dbReference type="PROSITE" id="PS51044">
    <property type="entry name" value="ZF_SP_RING"/>
    <property type="match status" value="1"/>
</dbReference>
<accession>Q91VT1</accession>
<accession>Q8BQ88</accession>
<accession>Q9D1D3</accession>
<evidence type="ECO:0000250" key="1">
    <source>
        <dbReference type="UniProtKB" id="Q96MF7"/>
    </source>
</evidence>
<evidence type="ECO:0000255" key="2">
    <source>
        <dbReference type="PROSITE-ProRule" id="PRU00452"/>
    </source>
</evidence>
<evidence type="ECO:0000303" key="3">
    <source>
    </source>
</evidence>
<evidence type="ECO:0000305" key="4"/>
<feature type="chain" id="PRO_0000270940" description="E3 SUMO-protein ligase NSE2">
    <location>
        <begin position="1"/>
        <end position="247"/>
    </location>
</feature>
<feature type="zinc finger region" description="SP-RING-type" evidence="2">
    <location>
        <begin position="154"/>
        <end position="240"/>
    </location>
</feature>
<feature type="binding site" evidence="2">
    <location>
        <position position="185"/>
    </location>
    <ligand>
        <name>Zn(2+)</name>
        <dbReference type="ChEBI" id="CHEBI:29105"/>
    </ligand>
</feature>
<feature type="binding site" evidence="2">
    <location>
        <position position="187"/>
    </location>
    <ligand>
        <name>Zn(2+)</name>
        <dbReference type="ChEBI" id="CHEBI:29105"/>
    </ligand>
</feature>
<feature type="binding site" evidence="2">
    <location>
        <position position="210"/>
    </location>
    <ligand>
        <name>Zn(2+)</name>
        <dbReference type="ChEBI" id="CHEBI:29105"/>
    </ligand>
</feature>
<feature type="binding site" evidence="2">
    <location>
        <position position="215"/>
    </location>
    <ligand>
        <name>Zn(2+)</name>
        <dbReference type="ChEBI" id="CHEBI:29105"/>
    </ligand>
</feature>
<feature type="modified residue" description="N-acetylmethionine" evidence="1">
    <location>
        <position position="1"/>
    </location>
</feature>
<feature type="modified residue" description="Phosphoserine" evidence="1">
    <location>
        <position position="116"/>
    </location>
</feature>
<feature type="cross-link" description="Glycyl lysine isopeptide (Lys-Gly) (interchain with G-Cter in SUMO2)" evidence="1">
    <location>
        <position position="90"/>
    </location>
</feature>
<feature type="cross-link" description="Glycyl lysine isopeptide (Lys-Gly) (interchain with G-Cter in SUMO2)" evidence="1">
    <location>
        <position position="107"/>
    </location>
</feature>
<feature type="cross-link" description="Glycyl lysine isopeptide (Lys-Gly) (interchain with G-Cter in SUMO2)" evidence="1">
    <location>
        <position position="125"/>
    </location>
</feature>
<feature type="cross-link" description="Glycyl lysine isopeptide (Lys-Gly) (interchain with G-Cter in SUMO2)" evidence="1">
    <location>
        <position position="130"/>
    </location>
</feature>
<feature type="splice variant" id="VSP_022250" description="In isoform 2." evidence="3">
    <location>
        <begin position="140"/>
        <end position="247"/>
    </location>
</feature>
<feature type="sequence conflict" description="In Ref. 1; BAB22938." evidence="4" ref="1">
    <original>D</original>
    <variation>G</variation>
    <location>
        <position position="47"/>
    </location>
</feature>
<gene>
    <name type="primary">Nsmce2</name>
    <name type="synonym">Mms21</name>
</gene>
<protein>
    <recommendedName>
        <fullName>E3 SUMO-protein ligase NSE2</fullName>
        <ecNumber evidence="1">2.3.2.-</ecNumber>
    </recommendedName>
    <alternativeName>
        <fullName evidence="4">E3 SUMO-protein transferase NSE2</fullName>
    </alternativeName>
    <alternativeName>
        <fullName>MMS21 homolog</fullName>
    </alternativeName>
    <alternativeName>
        <fullName>Non-structural maintenance of chromosomes element 2 homolog</fullName>
        <shortName>Non-SMC element 2 homolog</shortName>
    </alternativeName>
</protein>
<proteinExistence type="evidence at transcript level"/>
<comment type="function">
    <text evidence="1">E3 SUMO-protein ligase component of the SMC5-SMC6 complex, a complex involved in DNA double-strand break repair by homologous recombination. Is not be required for the stability of the complex. The complex may promote sister chromatid homologous recombination by recruiting the SMC1-SMC3 cohesin complex to double-strand breaks. Acts as an E3 ligase mediating SUMO attachment to various proteins such as SMC6L1 and TSNAX, the shelterin complex subunits TERF1, TERF2, TINF2 and TERF2IP, RAD51AP1, and maybe the cohesin components RAD21 and STAG2. Required for recruitment of telomeres to PML nuclear bodies. Required for sister chromatid cohesion during prometaphase and mitotic progression.</text>
</comment>
<comment type="pathway">
    <text evidence="1">Protein modification; protein sumoylation.</text>
</comment>
<comment type="subunit">
    <text evidence="1">Component of the SMC5-SMC6 complex which consists at least of SMC5, SMC6, NSMCE2, NSMCE1, NSMCE4A or EID3 and NSMCE3.</text>
</comment>
<comment type="subcellular location">
    <subcellularLocation>
        <location evidence="1">Nucleus</location>
    </subcellularLocation>
    <subcellularLocation>
        <location evidence="1">Chromosome</location>
        <location evidence="1">Telomere</location>
    </subcellularLocation>
    <subcellularLocation>
        <location evidence="1">Nucleus</location>
        <location evidence="1">PML body</location>
    </subcellularLocation>
    <text evidence="1">Localizes to PML nuclear bodies in ALT cell lines.</text>
</comment>
<comment type="alternative products">
    <event type="alternative splicing"/>
    <isoform>
        <id>Q91VT1-1</id>
        <name>1</name>
        <sequence type="displayed"/>
    </isoform>
    <isoform>
        <id>Q91VT1-2</id>
        <name>2</name>
        <sequence type="described" ref="VSP_022250"/>
    </isoform>
</comment>
<comment type="PTM">
    <text evidence="1">Sumoylated, possibly via autosumoylation.</text>
</comment>
<comment type="similarity">
    <text evidence="4">Belongs to the NSE2 family.</text>
</comment>
<sequence length="247" mass="28231">MPGRSSTSSGSTRYISFSGIESALSSLKNFQSCISSGMDTVSSVALDLVETQTEVSSEYSMDKAMVEFAKMDRELSHYVKAVQSTINHVKEERPEKVPDLKLLVEKKFLALQDKNSDADFKENEKFVQFKQQLRELKKQYGIHADRENDLTEGVDEDMIVTQSQTNFICPITQLEMKKPVKNKMCGHTYEEEAIVRMIESKHKRKKKACCPKIGCSHTDMRMSDLIPDEALRRAIESHNKKKKRHSE</sequence>
<reference key="1">
    <citation type="journal article" date="2005" name="Science">
        <title>The transcriptional landscape of the mammalian genome.</title>
        <authorList>
            <person name="Carninci P."/>
            <person name="Kasukawa T."/>
            <person name="Katayama S."/>
            <person name="Gough J."/>
            <person name="Frith M.C."/>
            <person name="Maeda N."/>
            <person name="Oyama R."/>
            <person name="Ravasi T."/>
            <person name="Lenhard B."/>
            <person name="Wells C."/>
            <person name="Kodzius R."/>
            <person name="Shimokawa K."/>
            <person name="Bajic V.B."/>
            <person name="Brenner S.E."/>
            <person name="Batalov S."/>
            <person name="Forrest A.R."/>
            <person name="Zavolan M."/>
            <person name="Davis M.J."/>
            <person name="Wilming L.G."/>
            <person name="Aidinis V."/>
            <person name="Allen J.E."/>
            <person name="Ambesi-Impiombato A."/>
            <person name="Apweiler R."/>
            <person name="Aturaliya R.N."/>
            <person name="Bailey T.L."/>
            <person name="Bansal M."/>
            <person name="Baxter L."/>
            <person name="Beisel K.W."/>
            <person name="Bersano T."/>
            <person name="Bono H."/>
            <person name="Chalk A.M."/>
            <person name="Chiu K.P."/>
            <person name="Choudhary V."/>
            <person name="Christoffels A."/>
            <person name="Clutterbuck D.R."/>
            <person name="Crowe M.L."/>
            <person name="Dalla E."/>
            <person name="Dalrymple B.P."/>
            <person name="de Bono B."/>
            <person name="Della Gatta G."/>
            <person name="di Bernardo D."/>
            <person name="Down T."/>
            <person name="Engstrom P."/>
            <person name="Fagiolini M."/>
            <person name="Faulkner G."/>
            <person name="Fletcher C.F."/>
            <person name="Fukushima T."/>
            <person name="Furuno M."/>
            <person name="Futaki S."/>
            <person name="Gariboldi M."/>
            <person name="Georgii-Hemming P."/>
            <person name="Gingeras T.R."/>
            <person name="Gojobori T."/>
            <person name="Green R.E."/>
            <person name="Gustincich S."/>
            <person name="Harbers M."/>
            <person name="Hayashi Y."/>
            <person name="Hensch T.K."/>
            <person name="Hirokawa N."/>
            <person name="Hill D."/>
            <person name="Huminiecki L."/>
            <person name="Iacono M."/>
            <person name="Ikeo K."/>
            <person name="Iwama A."/>
            <person name="Ishikawa T."/>
            <person name="Jakt M."/>
            <person name="Kanapin A."/>
            <person name="Katoh M."/>
            <person name="Kawasawa Y."/>
            <person name="Kelso J."/>
            <person name="Kitamura H."/>
            <person name="Kitano H."/>
            <person name="Kollias G."/>
            <person name="Krishnan S.P."/>
            <person name="Kruger A."/>
            <person name="Kummerfeld S.K."/>
            <person name="Kurochkin I.V."/>
            <person name="Lareau L.F."/>
            <person name="Lazarevic D."/>
            <person name="Lipovich L."/>
            <person name="Liu J."/>
            <person name="Liuni S."/>
            <person name="McWilliam S."/>
            <person name="Madan Babu M."/>
            <person name="Madera M."/>
            <person name="Marchionni L."/>
            <person name="Matsuda H."/>
            <person name="Matsuzawa S."/>
            <person name="Miki H."/>
            <person name="Mignone F."/>
            <person name="Miyake S."/>
            <person name="Morris K."/>
            <person name="Mottagui-Tabar S."/>
            <person name="Mulder N."/>
            <person name="Nakano N."/>
            <person name="Nakauchi H."/>
            <person name="Ng P."/>
            <person name="Nilsson R."/>
            <person name="Nishiguchi S."/>
            <person name="Nishikawa S."/>
            <person name="Nori F."/>
            <person name="Ohara O."/>
            <person name="Okazaki Y."/>
            <person name="Orlando V."/>
            <person name="Pang K.C."/>
            <person name="Pavan W.J."/>
            <person name="Pavesi G."/>
            <person name="Pesole G."/>
            <person name="Petrovsky N."/>
            <person name="Piazza S."/>
            <person name="Reed J."/>
            <person name="Reid J.F."/>
            <person name="Ring B.Z."/>
            <person name="Ringwald M."/>
            <person name="Rost B."/>
            <person name="Ruan Y."/>
            <person name="Salzberg S.L."/>
            <person name="Sandelin A."/>
            <person name="Schneider C."/>
            <person name="Schoenbach C."/>
            <person name="Sekiguchi K."/>
            <person name="Semple C.A."/>
            <person name="Seno S."/>
            <person name="Sessa L."/>
            <person name="Sheng Y."/>
            <person name="Shibata Y."/>
            <person name="Shimada H."/>
            <person name="Shimada K."/>
            <person name="Silva D."/>
            <person name="Sinclair B."/>
            <person name="Sperling S."/>
            <person name="Stupka E."/>
            <person name="Sugiura K."/>
            <person name="Sultana R."/>
            <person name="Takenaka Y."/>
            <person name="Taki K."/>
            <person name="Tammoja K."/>
            <person name="Tan S.L."/>
            <person name="Tang S."/>
            <person name="Taylor M.S."/>
            <person name="Tegner J."/>
            <person name="Teichmann S.A."/>
            <person name="Ueda H.R."/>
            <person name="van Nimwegen E."/>
            <person name="Verardo R."/>
            <person name="Wei C.L."/>
            <person name="Yagi K."/>
            <person name="Yamanishi H."/>
            <person name="Zabarovsky E."/>
            <person name="Zhu S."/>
            <person name="Zimmer A."/>
            <person name="Hide W."/>
            <person name="Bult C."/>
            <person name="Grimmond S.M."/>
            <person name="Teasdale R.D."/>
            <person name="Liu E.T."/>
            <person name="Brusic V."/>
            <person name="Quackenbush J."/>
            <person name="Wahlestedt C."/>
            <person name="Mattick J.S."/>
            <person name="Hume D.A."/>
            <person name="Kai C."/>
            <person name="Sasaki D."/>
            <person name="Tomaru Y."/>
            <person name="Fukuda S."/>
            <person name="Kanamori-Katayama M."/>
            <person name="Suzuki M."/>
            <person name="Aoki J."/>
            <person name="Arakawa T."/>
            <person name="Iida J."/>
            <person name="Imamura K."/>
            <person name="Itoh M."/>
            <person name="Kato T."/>
            <person name="Kawaji H."/>
            <person name="Kawagashira N."/>
            <person name="Kawashima T."/>
            <person name="Kojima M."/>
            <person name="Kondo S."/>
            <person name="Konno H."/>
            <person name="Nakano K."/>
            <person name="Ninomiya N."/>
            <person name="Nishio T."/>
            <person name="Okada M."/>
            <person name="Plessy C."/>
            <person name="Shibata K."/>
            <person name="Shiraki T."/>
            <person name="Suzuki S."/>
            <person name="Tagami M."/>
            <person name="Waki K."/>
            <person name="Watahiki A."/>
            <person name="Okamura-Oho Y."/>
            <person name="Suzuki H."/>
            <person name="Kawai J."/>
            <person name="Hayashizaki Y."/>
        </authorList>
    </citation>
    <scope>NUCLEOTIDE SEQUENCE [LARGE SCALE MRNA] (ISOFORMS 1 AND 2)</scope>
    <source>
        <strain>C57BL/6J</strain>
        <tissue>Spinal ganglion</tissue>
    </source>
</reference>
<reference key="2">
    <citation type="journal article" date="2004" name="Genome Res.">
        <title>The status, quality, and expansion of the NIH full-length cDNA project: the Mammalian Gene Collection (MGC).</title>
        <authorList>
            <consortium name="The MGC Project Team"/>
        </authorList>
    </citation>
    <scope>NUCLEOTIDE SEQUENCE [LARGE SCALE MRNA] (ISOFORM 1)</scope>
    <source>
        <strain>129</strain>
        <tissue>Mammary tumor</tissue>
    </source>
</reference>
<keyword id="KW-0007">Acetylation</keyword>
<keyword id="KW-0025">Alternative splicing</keyword>
<keyword id="KW-0131">Cell cycle</keyword>
<keyword id="KW-0132">Cell division</keyword>
<keyword id="KW-0158">Chromosome</keyword>
<keyword id="KW-0227">DNA damage</keyword>
<keyword id="KW-0233">DNA recombination</keyword>
<keyword id="KW-0234">DNA repair</keyword>
<keyword id="KW-1017">Isopeptide bond</keyword>
<keyword id="KW-0479">Metal-binding</keyword>
<keyword id="KW-0498">Mitosis</keyword>
<keyword id="KW-0539">Nucleus</keyword>
<keyword id="KW-0597">Phosphoprotein</keyword>
<keyword id="KW-1185">Reference proteome</keyword>
<keyword id="KW-0779">Telomere</keyword>
<keyword id="KW-0808">Transferase</keyword>
<keyword id="KW-0832">Ubl conjugation</keyword>
<keyword id="KW-0833">Ubl conjugation pathway</keyword>
<keyword id="KW-0862">Zinc</keyword>
<keyword id="KW-0863">Zinc-finger</keyword>
<name>NSE2_MOUSE</name>
<organism>
    <name type="scientific">Mus musculus</name>
    <name type="common">Mouse</name>
    <dbReference type="NCBI Taxonomy" id="10090"/>
    <lineage>
        <taxon>Eukaryota</taxon>
        <taxon>Metazoa</taxon>
        <taxon>Chordata</taxon>
        <taxon>Craniata</taxon>
        <taxon>Vertebrata</taxon>
        <taxon>Euteleostomi</taxon>
        <taxon>Mammalia</taxon>
        <taxon>Eutheria</taxon>
        <taxon>Euarchontoglires</taxon>
        <taxon>Glires</taxon>
        <taxon>Rodentia</taxon>
        <taxon>Myomorpha</taxon>
        <taxon>Muroidea</taxon>
        <taxon>Muridae</taxon>
        <taxon>Murinae</taxon>
        <taxon>Mus</taxon>
        <taxon>Mus</taxon>
    </lineage>
</organism>